<gene>
    <name evidence="1" type="primary">lplA</name>
    <name type="ordered locus">STM4576</name>
</gene>
<feature type="chain" id="PRO_0000209570" description="Lipoate-protein ligase A">
    <location>
        <begin position="1"/>
        <end position="338"/>
    </location>
</feature>
<feature type="domain" description="BPL/LPL catalytic" evidence="2">
    <location>
        <begin position="29"/>
        <end position="216"/>
    </location>
</feature>
<feature type="binding site" evidence="1">
    <location>
        <position position="71"/>
    </location>
    <ligand>
        <name>ATP</name>
        <dbReference type="ChEBI" id="CHEBI:30616"/>
    </ligand>
</feature>
<feature type="binding site" evidence="1">
    <location>
        <begin position="76"/>
        <end position="79"/>
    </location>
    <ligand>
        <name>ATP</name>
        <dbReference type="ChEBI" id="CHEBI:30616"/>
    </ligand>
</feature>
<feature type="binding site" evidence="1">
    <location>
        <position position="134"/>
    </location>
    <ligand>
        <name>(R)-lipoate</name>
        <dbReference type="ChEBI" id="CHEBI:83088"/>
    </ligand>
</feature>
<feature type="binding site" evidence="1">
    <location>
        <position position="134"/>
    </location>
    <ligand>
        <name>ATP</name>
        <dbReference type="ChEBI" id="CHEBI:30616"/>
    </ligand>
</feature>
<sequence length="338" mass="37935">MTTLRLLISDSYDPWFNLAVEECIFRQMPATQRVLFLWRNADTVVIGRAQNPWKECNTRRMEEDNVRLARRSSGGGAVFHDLGNTCFTFMAGKPEYDKTISTHIVLAALNSLGVMADASGRNDLVVKTPDGDRKVSGSAYRETKDRGFHHGTLLLNADLSRLANYLNPDKKKLAAKGITSVRSRVANLTELLPGITHEQVCQAVTEAFFAHYGERVDAEVISPDKTPDLPNFAETFARQSSWEWNFGQAPAFSHLLDERFTWGGVELHFDVEKGVITRAQAFTDSLNPAPLEALAERLQGCLYRADKLQETCEALLVDFPEQEKELRELSAWIAEAVR</sequence>
<comment type="function">
    <text evidence="1">Catalyzes both the ATP-dependent activation of exogenously supplied lipoate to lipoyl-AMP and the transfer of the activated lipoyl onto the lipoyl domains of lipoate-dependent enzymes.</text>
</comment>
<comment type="catalytic activity">
    <reaction evidence="1">
        <text>L-lysyl-[lipoyl-carrier protein] + (R)-lipoate + ATP = N(6)-[(R)-lipoyl]-L-lysyl-[lipoyl-carrier protein] + AMP + diphosphate + H(+)</text>
        <dbReference type="Rhea" id="RHEA:49288"/>
        <dbReference type="Rhea" id="RHEA-COMP:10500"/>
        <dbReference type="Rhea" id="RHEA-COMP:10502"/>
        <dbReference type="ChEBI" id="CHEBI:15378"/>
        <dbReference type="ChEBI" id="CHEBI:29969"/>
        <dbReference type="ChEBI" id="CHEBI:30616"/>
        <dbReference type="ChEBI" id="CHEBI:33019"/>
        <dbReference type="ChEBI" id="CHEBI:83088"/>
        <dbReference type="ChEBI" id="CHEBI:83099"/>
        <dbReference type="ChEBI" id="CHEBI:456215"/>
        <dbReference type="EC" id="6.3.1.20"/>
    </reaction>
</comment>
<comment type="pathway">
    <text evidence="1">Protein modification; protein lipoylation via exogenous pathway; protein N(6)-(lipoyl)lysine from lipoate: step 1/2.</text>
</comment>
<comment type="pathway">
    <text evidence="1">Protein modification; protein lipoylation via exogenous pathway; protein N(6)-(lipoyl)lysine from lipoate: step 2/2.</text>
</comment>
<comment type="subunit">
    <text evidence="1">Monomer.</text>
</comment>
<comment type="subcellular location">
    <subcellularLocation>
        <location evidence="1">Cytoplasm</location>
    </subcellularLocation>
</comment>
<comment type="miscellaneous">
    <text evidence="1">In the transfer reaction, the free carboxyl group of lipoic acid is attached via an amide linkage to the epsilon-amino group of a specific lysine residue of lipoyl domains of lipoate-dependent enzymes.</text>
</comment>
<comment type="similarity">
    <text evidence="1">Belongs to the LplA family.</text>
</comment>
<protein>
    <recommendedName>
        <fullName evidence="1">Lipoate-protein ligase A</fullName>
        <ecNumber evidence="1">6.3.1.20</ecNumber>
    </recommendedName>
    <alternativeName>
        <fullName evidence="1">Lipoate--protein ligase</fullName>
    </alternativeName>
</protein>
<dbReference type="EC" id="6.3.1.20" evidence="1"/>
<dbReference type="EMBL" id="AE006468">
    <property type="protein sequence ID" value="AAL23391.1"/>
    <property type="molecule type" value="Genomic_DNA"/>
</dbReference>
<dbReference type="RefSeq" id="NP_463432.1">
    <property type="nucleotide sequence ID" value="NC_003197.2"/>
</dbReference>
<dbReference type="RefSeq" id="WP_000209756.1">
    <property type="nucleotide sequence ID" value="NC_003197.2"/>
</dbReference>
<dbReference type="SMR" id="Q8ZJV1"/>
<dbReference type="STRING" id="99287.STM4576"/>
<dbReference type="PaxDb" id="99287-STM4576"/>
<dbReference type="DNASU" id="1256102"/>
<dbReference type="GeneID" id="1256102"/>
<dbReference type="KEGG" id="stm:STM4576"/>
<dbReference type="PATRIC" id="fig|99287.12.peg.4818"/>
<dbReference type="HOGENOM" id="CLU_022986_0_1_6"/>
<dbReference type="OMA" id="RYQNWDW"/>
<dbReference type="PhylomeDB" id="Q8ZJV1"/>
<dbReference type="BioCyc" id="SENT99287:STM4576-MONOMER"/>
<dbReference type="UniPathway" id="UPA00537">
    <property type="reaction ID" value="UER00594"/>
</dbReference>
<dbReference type="UniPathway" id="UPA00537">
    <property type="reaction ID" value="UER00595"/>
</dbReference>
<dbReference type="Proteomes" id="UP000001014">
    <property type="component" value="Chromosome"/>
</dbReference>
<dbReference type="GO" id="GO:0005737">
    <property type="term" value="C:cytoplasm"/>
    <property type="evidence" value="ECO:0000318"/>
    <property type="project" value="GO_Central"/>
</dbReference>
<dbReference type="GO" id="GO:0005829">
    <property type="term" value="C:cytosol"/>
    <property type="evidence" value="ECO:0000318"/>
    <property type="project" value="GO_Central"/>
</dbReference>
<dbReference type="GO" id="GO:0005524">
    <property type="term" value="F:ATP binding"/>
    <property type="evidence" value="ECO:0007669"/>
    <property type="project" value="UniProtKB-KW"/>
</dbReference>
<dbReference type="GO" id="GO:0016979">
    <property type="term" value="F:lipoate-protein ligase activity"/>
    <property type="evidence" value="ECO:0000318"/>
    <property type="project" value="GO_Central"/>
</dbReference>
<dbReference type="GO" id="GO:0017118">
    <property type="term" value="F:lipoyltransferase activity"/>
    <property type="evidence" value="ECO:0000318"/>
    <property type="project" value="GO_Central"/>
</dbReference>
<dbReference type="GO" id="GO:0036211">
    <property type="term" value="P:protein modification process"/>
    <property type="evidence" value="ECO:0007669"/>
    <property type="project" value="InterPro"/>
</dbReference>
<dbReference type="CDD" id="cd16443">
    <property type="entry name" value="LplA"/>
    <property type="match status" value="1"/>
</dbReference>
<dbReference type="FunFam" id="3.30.390.50:FF:000002">
    <property type="entry name" value="Lipoate-protein ligase A"/>
    <property type="match status" value="1"/>
</dbReference>
<dbReference type="FunFam" id="3.30.930.10:FF:000024">
    <property type="entry name" value="Lipoate-protein ligase A"/>
    <property type="match status" value="1"/>
</dbReference>
<dbReference type="Gene3D" id="3.30.930.10">
    <property type="entry name" value="Bira Bifunctional Protein, Domain 2"/>
    <property type="match status" value="1"/>
</dbReference>
<dbReference type="Gene3D" id="3.30.390.50">
    <property type="entry name" value="CO dehydrogenase flavoprotein, C-terminal domain"/>
    <property type="match status" value="1"/>
</dbReference>
<dbReference type="HAMAP" id="MF_01602">
    <property type="entry name" value="LplA"/>
    <property type="match status" value="1"/>
</dbReference>
<dbReference type="InterPro" id="IPR045864">
    <property type="entry name" value="aa-tRNA-synth_II/BPL/LPL"/>
</dbReference>
<dbReference type="InterPro" id="IPR004143">
    <property type="entry name" value="BPL_LPL_catalytic"/>
</dbReference>
<dbReference type="InterPro" id="IPR023741">
    <property type="entry name" value="Lipoate_ligase_A"/>
</dbReference>
<dbReference type="InterPro" id="IPR019491">
    <property type="entry name" value="Lipoate_protein_ligase_C"/>
</dbReference>
<dbReference type="InterPro" id="IPR004562">
    <property type="entry name" value="LipoylTrfase_LipoateP_Ligase"/>
</dbReference>
<dbReference type="NCBIfam" id="TIGR00545">
    <property type="entry name" value="lipoyltrans"/>
    <property type="match status" value="1"/>
</dbReference>
<dbReference type="PANTHER" id="PTHR12561">
    <property type="entry name" value="LIPOATE-PROTEIN LIGASE"/>
    <property type="match status" value="1"/>
</dbReference>
<dbReference type="PANTHER" id="PTHR12561:SF3">
    <property type="entry name" value="LIPOYLTRANSFERASE 1, MITOCHONDRIAL"/>
    <property type="match status" value="1"/>
</dbReference>
<dbReference type="Pfam" id="PF10437">
    <property type="entry name" value="Lip_prot_lig_C"/>
    <property type="match status" value="1"/>
</dbReference>
<dbReference type="Pfam" id="PF21948">
    <property type="entry name" value="LplA-B_cat"/>
    <property type="match status" value="1"/>
</dbReference>
<dbReference type="SUPFAM" id="SSF55681">
    <property type="entry name" value="Class II aaRS and biotin synthetases"/>
    <property type="match status" value="1"/>
</dbReference>
<dbReference type="SUPFAM" id="SSF82649">
    <property type="entry name" value="SufE/NifU"/>
    <property type="match status" value="1"/>
</dbReference>
<dbReference type="PROSITE" id="PS51733">
    <property type="entry name" value="BPL_LPL_CATALYTIC"/>
    <property type="match status" value="1"/>
</dbReference>
<keyword id="KW-0067">ATP-binding</keyword>
<keyword id="KW-0963">Cytoplasm</keyword>
<keyword id="KW-0436">Ligase</keyword>
<keyword id="KW-0547">Nucleotide-binding</keyword>
<keyword id="KW-1185">Reference proteome</keyword>
<accession>Q8ZJV1</accession>
<reference key="1">
    <citation type="journal article" date="2001" name="Nature">
        <title>Complete genome sequence of Salmonella enterica serovar Typhimurium LT2.</title>
        <authorList>
            <person name="McClelland M."/>
            <person name="Sanderson K.E."/>
            <person name="Spieth J."/>
            <person name="Clifton S.W."/>
            <person name="Latreille P."/>
            <person name="Courtney L."/>
            <person name="Porwollik S."/>
            <person name="Ali J."/>
            <person name="Dante M."/>
            <person name="Du F."/>
            <person name="Hou S."/>
            <person name="Layman D."/>
            <person name="Leonard S."/>
            <person name="Nguyen C."/>
            <person name="Scott K."/>
            <person name="Holmes A."/>
            <person name="Grewal N."/>
            <person name="Mulvaney E."/>
            <person name="Ryan E."/>
            <person name="Sun H."/>
            <person name="Florea L."/>
            <person name="Miller W."/>
            <person name="Stoneking T."/>
            <person name="Nhan M."/>
            <person name="Waterston R."/>
            <person name="Wilson R.K."/>
        </authorList>
    </citation>
    <scope>NUCLEOTIDE SEQUENCE [LARGE SCALE GENOMIC DNA]</scope>
    <source>
        <strain>LT2 / SGSC1412 / ATCC 700720</strain>
    </source>
</reference>
<proteinExistence type="inferred from homology"/>
<name>LPLA_SALTY</name>
<organism>
    <name type="scientific">Salmonella typhimurium (strain LT2 / SGSC1412 / ATCC 700720)</name>
    <dbReference type="NCBI Taxonomy" id="99287"/>
    <lineage>
        <taxon>Bacteria</taxon>
        <taxon>Pseudomonadati</taxon>
        <taxon>Pseudomonadota</taxon>
        <taxon>Gammaproteobacteria</taxon>
        <taxon>Enterobacterales</taxon>
        <taxon>Enterobacteriaceae</taxon>
        <taxon>Salmonella</taxon>
    </lineage>
</organism>
<evidence type="ECO:0000255" key="1">
    <source>
        <dbReference type="HAMAP-Rule" id="MF_01602"/>
    </source>
</evidence>
<evidence type="ECO:0000255" key="2">
    <source>
        <dbReference type="PROSITE-ProRule" id="PRU01067"/>
    </source>
</evidence>